<comment type="function">
    <text evidence="1">Catalyzes the reduction of the glycolytic intermediate dihydroxyacetone phosphate (DHAP) to sn-glycerol 3-phosphate (G3P), the key precursor for phospholipid synthesis.</text>
</comment>
<comment type="catalytic activity">
    <reaction evidence="1">
        <text>sn-glycerol 3-phosphate + NAD(+) = dihydroxyacetone phosphate + NADH + H(+)</text>
        <dbReference type="Rhea" id="RHEA:11092"/>
        <dbReference type="ChEBI" id="CHEBI:15378"/>
        <dbReference type="ChEBI" id="CHEBI:57540"/>
        <dbReference type="ChEBI" id="CHEBI:57597"/>
        <dbReference type="ChEBI" id="CHEBI:57642"/>
        <dbReference type="ChEBI" id="CHEBI:57945"/>
        <dbReference type="EC" id="1.1.1.94"/>
    </reaction>
    <physiologicalReaction direction="right-to-left" evidence="1">
        <dbReference type="Rhea" id="RHEA:11094"/>
    </physiologicalReaction>
</comment>
<comment type="catalytic activity">
    <reaction evidence="1">
        <text>sn-glycerol 3-phosphate + NADP(+) = dihydroxyacetone phosphate + NADPH + H(+)</text>
        <dbReference type="Rhea" id="RHEA:11096"/>
        <dbReference type="ChEBI" id="CHEBI:15378"/>
        <dbReference type="ChEBI" id="CHEBI:57597"/>
        <dbReference type="ChEBI" id="CHEBI:57642"/>
        <dbReference type="ChEBI" id="CHEBI:57783"/>
        <dbReference type="ChEBI" id="CHEBI:58349"/>
        <dbReference type="EC" id="1.1.1.94"/>
    </reaction>
    <physiologicalReaction direction="right-to-left" evidence="1">
        <dbReference type="Rhea" id="RHEA:11098"/>
    </physiologicalReaction>
</comment>
<comment type="pathway">
    <text evidence="1">Membrane lipid metabolism; glycerophospholipid metabolism.</text>
</comment>
<comment type="subcellular location">
    <subcellularLocation>
        <location evidence="1">Cytoplasm</location>
    </subcellularLocation>
</comment>
<comment type="similarity">
    <text evidence="1">Belongs to the NAD-dependent glycerol-3-phosphate dehydrogenase family.</text>
</comment>
<accession>Q87CK3</accession>
<gene>
    <name evidence="1" type="primary">gpsA</name>
    <name type="ordered locus">PD_1064</name>
</gene>
<keyword id="KW-0963">Cytoplasm</keyword>
<keyword id="KW-0444">Lipid biosynthesis</keyword>
<keyword id="KW-0443">Lipid metabolism</keyword>
<keyword id="KW-0520">NAD</keyword>
<keyword id="KW-0521">NADP</keyword>
<keyword id="KW-0547">Nucleotide-binding</keyword>
<keyword id="KW-0560">Oxidoreductase</keyword>
<keyword id="KW-0594">Phospholipid biosynthesis</keyword>
<keyword id="KW-1208">Phospholipid metabolism</keyword>
<keyword id="KW-1185">Reference proteome</keyword>
<organism>
    <name type="scientific">Xylella fastidiosa (strain Temecula1 / ATCC 700964)</name>
    <dbReference type="NCBI Taxonomy" id="183190"/>
    <lineage>
        <taxon>Bacteria</taxon>
        <taxon>Pseudomonadati</taxon>
        <taxon>Pseudomonadota</taxon>
        <taxon>Gammaproteobacteria</taxon>
        <taxon>Lysobacterales</taxon>
        <taxon>Lysobacteraceae</taxon>
        <taxon>Xylella</taxon>
    </lineage>
</organism>
<proteinExistence type="inferred from homology"/>
<name>GPDA_XYLFT</name>
<evidence type="ECO:0000255" key="1">
    <source>
        <dbReference type="HAMAP-Rule" id="MF_00394"/>
    </source>
</evidence>
<dbReference type="EC" id="1.1.1.94" evidence="1"/>
<dbReference type="EMBL" id="AE009442">
    <property type="protein sequence ID" value="AAO28922.1"/>
    <property type="molecule type" value="Genomic_DNA"/>
</dbReference>
<dbReference type="RefSeq" id="WP_004572788.1">
    <property type="nucleotide sequence ID" value="NC_004556.1"/>
</dbReference>
<dbReference type="SMR" id="Q87CK3"/>
<dbReference type="KEGG" id="xft:PD_1064"/>
<dbReference type="HOGENOM" id="CLU_033449_0_2_6"/>
<dbReference type="UniPathway" id="UPA00940"/>
<dbReference type="Proteomes" id="UP000002516">
    <property type="component" value="Chromosome"/>
</dbReference>
<dbReference type="GO" id="GO:0005829">
    <property type="term" value="C:cytosol"/>
    <property type="evidence" value="ECO:0007669"/>
    <property type="project" value="TreeGrafter"/>
</dbReference>
<dbReference type="GO" id="GO:0047952">
    <property type="term" value="F:glycerol-3-phosphate dehydrogenase [NAD(P)+] activity"/>
    <property type="evidence" value="ECO:0007669"/>
    <property type="project" value="UniProtKB-UniRule"/>
</dbReference>
<dbReference type="GO" id="GO:0051287">
    <property type="term" value="F:NAD binding"/>
    <property type="evidence" value="ECO:0007669"/>
    <property type="project" value="InterPro"/>
</dbReference>
<dbReference type="GO" id="GO:0005975">
    <property type="term" value="P:carbohydrate metabolic process"/>
    <property type="evidence" value="ECO:0007669"/>
    <property type="project" value="InterPro"/>
</dbReference>
<dbReference type="GO" id="GO:0046167">
    <property type="term" value="P:glycerol-3-phosphate biosynthetic process"/>
    <property type="evidence" value="ECO:0007669"/>
    <property type="project" value="UniProtKB-UniRule"/>
</dbReference>
<dbReference type="GO" id="GO:0046168">
    <property type="term" value="P:glycerol-3-phosphate catabolic process"/>
    <property type="evidence" value="ECO:0007669"/>
    <property type="project" value="InterPro"/>
</dbReference>
<dbReference type="GO" id="GO:0046474">
    <property type="term" value="P:glycerophospholipid biosynthetic process"/>
    <property type="evidence" value="ECO:0007669"/>
    <property type="project" value="TreeGrafter"/>
</dbReference>
<dbReference type="FunFam" id="1.10.1040.10:FF:000001">
    <property type="entry name" value="Glycerol-3-phosphate dehydrogenase [NAD(P)+]"/>
    <property type="match status" value="1"/>
</dbReference>
<dbReference type="FunFam" id="3.40.50.720:FF:000019">
    <property type="entry name" value="Glycerol-3-phosphate dehydrogenase [NAD(P)+]"/>
    <property type="match status" value="1"/>
</dbReference>
<dbReference type="Gene3D" id="1.10.1040.10">
    <property type="entry name" value="N-(1-d-carboxylethyl)-l-norvaline Dehydrogenase, domain 2"/>
    <property type="match status" value="1"/>
</dbReference>
<dbReference type="Gene3D" id="3.40.50.720">
    <property type="entry name" value="NAD(P)-binding Rossmann-like Domain"/>
    <property type="match status" value="1"/>
</dbReference>
<dbReference type="HAMAP" id="MF_00394">
    <property type="entry name" value="NAD_Glyc3P_dehydrog"/>
    <property type="match status" value="1"/>
</dbReference>
<dbReference type="InterPro" id="IPR008927">
    <property type="entry name" value="6-PGluconate_DH-like_C_sf"/>
</dbReference>
<dbReference type="InterPro" id="IPR013328">
    <property type="entry name" value="6PGD_dom2"/>
</dbReference>
<dbReference type="InterPro" id="IPR006168">
    <property type="entry name" value="G3P_DH_NAD-dep"/>
</dbReference>
<dbReference type="InterPro" id="IPR006109">
    <property type="entry name" value="G3P_DH_NAD-dep_C"/>
</dbReference>
<dbReference type="InterPro" id="IPR011128">
    <property type="entry name" value="G3P_DH_NAD-dep_N"/>
</dbReference>
<dbReference type="InterPro" id="IPR036291">
    <property type="entry name" value="NAD(P)-bd_dom_sf"/>
</dbReference>
<dbReference type="NCBIfam" id="NF000940">
    <property type="entry name" value="PRK00094.1-2"/>
    <property type="match status" value="1"/>
</dbReference>
<dbReference type="NCBIfam" id="NF000942">
    <property type="entry name" value="PRK00094.1-4"/>
    <property type="match status" value="1"/>
</dbReference>
<dbReference type="PANTHER" id="PTHR11728">
    <property type="entry name" value="GLYCEROL-3-PHOSPHATE DEHYDROGENASE"/>
    <property type="match status" value="1"/>
</dbReference>
<dbReference type="PANTHER" id="PTHR11728:SF1">
    <property type="entry name" value="GLYCEROL-3-PHOSPHATE DEHYDROGENASE [NAD(+)] 2, CHLOROPLASTIC"/>
    <property type="match status" value="1"/>
</dbReference>
<dbReference type="Pfam" id="PF07479">
    <property type="entry name" value="NAD_Gly3P_dh_C"/>
    <property type="match status" value="1"/>
</dbReference>
<dbReference type="Pfam" id="PF01210">
    <property type="entry name" value="NAD_Gly3P_dh_N"/>
    <property type="match status" value="1"/>
</dbReference>
<dbReference type="PIRSF" id="PIRSF000114">
    <property type="entry name" value="Glycerol-3-P_dh"/>
    <property type="match status" value="1"/>
</dbReference>
<dbReference type="PRINTS" id="PR00077">
    <property type="entry name" value="GPDHDRGNASE"/>
</dbReference>
<dbReference type="SUPFAM" id="SSF48179">
    <property type="entry name" value="6-phosphogluconate dehydrogenase C-terminal domain-like"/>
    <property type="match status" value="1"/>
</dbReference>
<dbReference type="SUPFAM" id="SSF51735">
    <property type="entry name" value="NAD(P)-binding Rossmann-fold domains"/>
    <property type="match status" value="1"/>
</dbReference>
<dbReference type="PROSITE" id="PS00957">
    <property type="entry name" value="NAD_G3PDH"/>
    <property type="match status" value="1"/>
</dbReference>
<protein>
    <recommendedName>
        <fullName evidence="1">Glycerol-3-phosphate dehydrogenase [NAD(P)+]</fullName>
        <ecNumber evidence="1">1.1.1.94</ecNumber>
    </recommendedName>
    <alternativeName>
        <fullName evidence="1">NAD(P)(+)-dependent glycerol-3-phosphate dehydrogenase</fullName>
    </alternativeName>
    <alternativeName>
        <fullName evidence="1">NAD(P)H-dependent dihydroxyacetone-phosphate reductase</fullName>
    </alternativeName>
</protein>
<reference key="1">
    <citation type="journal article" date="2003" name="J. Bacteriol.">
        <title>Comparative analyses of the complete genome sequences of Pierce's disease and citrus variegated chlorosis strains of Xylella fastidiosa.</title>
        <authorList>
            <person name="Van Sluys M.A."/>
            <person name="de Oliveira M.C."/>
            <person name="Monteiro-Vitorello C.B."/>
            <person name="Miyaki C.Y."/>
            <person name="Furlan L.R."/>
            <person name="Camargo L.E.A."/>
            <person name="da Silva A.C.R."/>
            <person name="Moon D.H."/>
            <person name="Takita M.A."/>
            <person name="Lemos E.G.M."/>
            <person name="Machado M.A."/>
            <person name="Ferro M.I.T."/>
            <person name="da Silva F.R."/>
            <person name="Goldman M.H.S."/>
            <person name="Goldman G.H."/>
            <person name="Lemos M.V.F."/>
            <person name="El-Dorry H."/>
            <person name="Tsai S.M."/>
            <person name="Carrer H."/>
            <person name="Carraro D.M."/>
            <person name="de Oliveira R.C."/>
            <person name="Nunes L.R."/>
            <person name="Siqueira W.J."/>
            <person name="Coutinho L.L."/>
            <person name="Kimura E.T."/>
            <person name="Ferro E.S."/>
            <person name="Harakava R."/>
            <person name="Kuramae E.E."/>
            <person name="Marino C.L."/>
            <person name="Giglioti E."/>
            <person name="Abreu I.L."/>
            <person name="Alves L.M.C."/>
            <person name="do Amaral A.M."/>
            <person name="Baia G.S."/>
            <person name="Blanco S.R."/>
            <person name="Brito M.S."/>
            <person name="Cannavan F.S."/>
            <person name="Celestino A.V."/>
            <person name="da Cunha A.F."/>
            <person name="Fenille R.C."/>
            <person name="Ferro J.A."/>
            <person name="Formighieri E.F."/>
            <person name="Kishi L.T."/>
            <person name="Leoni S.G."/>
            <person name="Oliveira A.R."/>
            <person name="Rosa V.E. Jr."/>
            <person name="Sassaki F.T."/>
            <person name="Sena J.A.D."/>
            <person name="de Souza A.A."/>
            <person name="Truffi D."/>
            <person name="Tsukumo F."/>
            <person name="Yanai G.M."/>
            <person name="Zaros L.G."/>
            <person name="Civerolo E.L."/>
            <person name="Simpson A.J.G."/>
            <person name="Almeida N.F. Jr."/>
            <person name="Setubal J.C."/>
            <person name="Kitajima J.P."/>
        </authorList>
    </citation>
    <scope>NUCLEOTIDE SEQUENCE [LARGE SCALE GENOMIC DNA]</scope>
    <source>
        <strain>Temecula1 / ATCC 700964</strain>
    </source>
</reference>
<feature type="chain" id="PRO_0000138064" description="Glycerol-3-phosphate dehydrogenase [NAD(P)+]">
    <location>
        <begin position="1"/>
        <end position="346"/>
    </location>
</feature>
<feature type="active site" description="Proton acceptor" evidence="1">
    <location>
        <position position="194"/>
    </location>
</feature>
<feature type="binding site" evidence="1">
    <location>
        <position position="15"/>
    </location>
    <ligand>
        <name>NADPH</name>
        <dbReference type="ChEBI" id="CHEBI:57783"/>
    </ligand>
</feature>
<feature type="binding site" evidence="1">
    <location>
        <position position="16"/>
    </location>
    <ligand>
        <name>NADPH</name>
        <dbReference type="ChEBI" id="CHEBI:57783"/>
    </ligand>
</feature>
<feature type="binding site" evidence="1">
    <location>
        <position position="36"/>
    </location>
    <ligand>
        <name>NADPH</name>
        <dbReference type="ChEBI" id="CHEBI:57783"/>
    </ligand>
</feature>
<feature type="binding site" evidence="1">
    <location>
        <position position="110"/>
    </location>
    <ligand>
        <name>NADPH</name>
        <dbReference type="ChEBI" id="CHEBI:57783"/>
    </ligand>
</feature>
<feature type="binding site" evidence="1">
    <location>
        <position position="110"/>
    </location>
    <ligand>
        <name>sn-glycerol 3-phosphate</name>
        <dbReference type="ChEBI" id="CHEBI:57597"/>
    </ligand>
</feature>
<feature type="binding site" evidence="1">
    <location>
        <position position="139"/>
    </location>
    <ligand>
        <name>sn-glycerol 3-phosphate</name>
        <dbReference type="ChEBI" id="CHEBI:57597"/>
    </ligand>
</feature>
<feature type="binding site" evidence="1">
    <location>
        <position position="141"/>
    </location>
    <ligand>
        <name>sn-glycerol 3-phosphate</name>
        <dbReference type="ChEBI" id="CHEBI:57597"/>
    </ligand>
</feature>
<feature type="binding site" evidence="1">
    <location>
        <position position="143"/>
    </location>
    <ligand>
        <name>NADPH</name>
        <dbReference type="ChEBI" id="CHEBI:57783"/>
    </ligand>
</feature>
<feature type="binding site" evidence="1">
    <location>
        <position position="194"/>
    </location>
    <ligand>
        <name>sn-glycerol 3-phosphate</name>
        <dbReference type="ChEBI" id="CHEBI:57597"/>
    </ligand>
</feature>
<feature type="binding site" evidence="1">
    <location>
        <position position="247"/>
    </location>
    <ligand>
        <name>sn-glycerol 3-phosphate</name>
        <dbReference type="ChEBI" id="CHEBI:57597"/>
    </ligand>
</feature>
<feature type="binding site" evidence="1">
    <location>
        <position position="257"/>
    </location>
    <ligand>
        <name>sn-glycerol 3-phosphate</name>
        <dbReference type="ChEBI" id="CHEBI:57597"/>
    </ligand>
</feature>
<feature type="binding site" evidence="1">
    <location>
        <position position="258"/>
    </location>
    <ligand>
        <name>NADPH</name>
        <dbReference type="ChEBI" id="CHEBI:57783"/>
    </ligand>
</feature>
<feature type="binding site" evidence="1">
    <location>
        <position position="258"/>
    </location>
    <ligand>
        <name>sn-glycerol 3-phosphate</name>
        <dbReference type="ChEBI" id="CHEBI:57597"/>
    </ligand>
</feature>
<feature type="binding site" evidence="1">
    <location>
        <position position="259"/>
    </location>
    <ligand>
        <name>sn-glycerol 3-phosphate</name>
        <dbReference type="ChEBI" id="CHEBI:57597"/>
    </ligand>
</feature>
<feature type="binding site" evidence="1">
    <location>
        <position position="282"/>
    </location>
    <ligand>
        <name>NADPH</name>
        <dbReference type="ChEBI" id="CHEBI:57783"/>
    </ligand>
</feature>
<feature type="binding site" evidence="1">
    <location>
        <position position="284"/>
    </location>
    <ligand>
        <name>NADPH</name>
        <dbReference type="ChEBI" id="CHEBI:57783"/>
    </ligand>
</feature>
<sequence>MIDSKQKIAVLGAGSWGTALAALVARHDYPTILWGRDVRVIQSIDIQHQNFRYLPSIMLPQTLRATTDLAAAVSGADWVLVAVPSYAFTETLCRLAPLLSIGVGVAWATKGFEPGSGRFLHEVAREILGGDAPLAVVTGPSFAKEVTLGLPTAVTVHGEDACFTQMVANAMHGPMFRAYTGNDVIGAELGGAMKNVLAVAIGVADGMQLGMNARAGLITRGLNEMLRLSAVIGARPETLMGLAGLGDLVLTCTGDLSRNRRLGFALGRGQSLSDAIREIGQVVESVQTSDEVMRHAEQNGVELPISEAVRAVLREEITPYAGMKVLLAREQKPEYLDILFKANCSL</sequence>